<gene>
    <name evidence="1" type="primary">lipB</name>
    <name type="ordered locus">Shal_3240</name>
</gene>
<organism>
    <name type="scientific">Shewanella halifaxensis (strain HAW-EB4)</name>
    <dbReference type="NCBI Taxonomy" id="458817"/>
    <lineage>
        <taxon>Bacteria</taxon>
        <taxon>Pseudomonadati</taxon>
        <taxon>Pseudomonadota</taxon>
        <taxon>Gammaproteobacteria</taxon>
        <taxon>Alteromonadales</taxon>
        <taxon>Shewanellaceae</taxon>
        <taxon>Shewanella</taxon>
    </lineage>
</organism>
<comment type="function">
    <text evidence="1">Catalyzes the transfer of endogenously produced octanoic acid from octanoyl-acyl-carrier-protein onto the lipoyl domains of lipoate-dependent enzymes. Lipoyl-ACP can also act as a substrate although octanoyl-ACP is likely to be the physiological substrate.</text>
</comment>
<comment type="catalytic activity">
    <reaction evidence="1">
        <text>octanoyl-[ACP] + L-lysyl-[protein] = N(6)-octanoyl-L-lysyl-[protein] + holo-[ACP] + H(+)</text>
        <dbReference type="Rhea" id="RHEA:17665"/>
        <dbReference type="Rhea" id="RHEA-COMP:9636"/>
        <dbReference type="Rhea" id="RHEA-COMP:9685"/>
        <dbReference type="Rhea" id="RHEA-COMP:9752"/>
        <dbReference type="Rhea" id="RHEA-COMP:9928"/>
        <dbReference type="ChEBI" id="CHEBI:15378"/>
        <dbReference type="ChEBI" id="CHEBI:29969"/>
        <dbReference type="ChEBI" id="CHEBI:64479"/>
        <dbReference type="ChEBI" id="CHEBI:78463"/>
        <dbReference type="ChEBI" id="CHEBI:78809"/>
        <dbReference type="EC" id="2.3.1.181"/>
    </reaction>
</comment>
<comment type="pathway">
    <text evidence="1">Protein modification; protein lipoylation via endogenous pathway; protein N(6)-(lipoyl)lysine from octanoyl-[acyl-carrier-protein]: step 1/2.</text>
</comment>
<comment type="subcellular location">
    <subcellularLocation>
        <location evidence="1">Cytoplasm</location>
    </subcellularLocation>
</comment>
<comment type="miscellaneous">
    <text evidence="1">In the reaction, the free carboxyl group of octanoic acid is attached via an amide linkage to the epsilon-amino group of a specific lysine residue of lipoyl domains of lipoate-dependent enzymes.</text>
</comment>
<comment type="similarity">
    <text evidence="1">Belongs to the LipB family.</text>
</comment>
<reference key="1">
    <citation type="submission" date="2008-01" db="EMBL/GenBank/DDBJ databases">
        <title>Complete sequence of Shewanella halifaxensis HAW-EB4.</title>
        <authorList>
            <consortium name="US DOE Joint Genome Institute"/>
            <person name="Copeland A."/>
            <person name="Lucas S."/>
            <person name="Lapidus A."/>
            <person name="Glavina del Rio T."/>
            <person name="Dalin E."/>
            <person name="Tice H."/>
            <person name="Bruce D."/>
            <person name="Goodwin L."/>
            <person name="Pitluck S."/>
            <person name="Sims D."/>
            <person name="Brettin T."/>
            <person name="Detter J.C."/>
            <person name="Han C."/>
            <person name="Kuske C.R."/>
            <person name="Schmutz J."/>
            <person name="Larimer F."/>
            <person name="Land M."/>
            <person name="Hauser L."/>
            <person name="Kyrpides N."/>
            <person name="Kim E."/>
            <person name="Zhao J.-S."/>
            <person name="Richardson P."/>
        </authorList>
    </citation>
    <scope>NUCLEOTIDE SEQUENCE [LARGE SCALE GENOMIC DNA]</scope>
    <source>
        <strain>HAW-EB4</strain>
    </source>
</reference>
<sequence length="219" mass="24811">MYDNALHIRHLGKQDYESVWHAMQHYTDNRDENSQDEIWIVEHTPVFTQGQAGKSEHILNPGDIPVIQVDRGGQVTYHGPGQLVVYPLLDIKRLKIGVRQLVTHIEQSIINMLKRYQIEAYAKADAPGVYVEERKIASLGLRIRKGCSFHGLALNVDMDMSPFQRINPCGYAGMEMIQCKQLGGPQTVEEAGRQLIETLSQELGLDKLVHHQGLPESYE</sequence>
<name>LIPB_SHEHH</name>
<evidence type="ECO:0000255" key="1">
    <source>
        <dbReference type="HAMAP-Rule" id="MF_00013"/>
    </source>
</evidence>
<evidence type="ECO:0000255" key="2">
    <source>
        <dbReference type="PROSITE-ProRule" id="PRU01067"/>
    </source>
</evidence>
<accession>B0TR56</accession>
<dbReference type="EC" id="2.3.1.181" evidence="1"/>
<dbReference type="EMBL" id="CP000931">
    <property type="protein sequence ID" value="ABZ77787.1"/>
    <property type="molecule type" value="Genomic_DNA"/>
</dbReference>
<dbReference type="RefSeq" id="WP_012278309.1">
    <property type="nucleotide sequence ID" value="NC_010334.1"/>
</dbReference>
<dbReference type="SMR" id="B0TR56"/>
<dbReference type="STRING" id="458817.Shal_3240"/>
<dbReference type="KEGG" id="shl:Shal_3240"/>
<dbReference type="eggNOG" id="COG0321">
    <property type="taxonomic scope" value="Bacteria"/>
</dbReference>
<dbReference type="HOGENOM" id="CLU_035168_3_1_6"/>
<dbReference type="OrthoDB" id="9787061at2"/>
<dbReference type="UniPathway" id="UPA00538">
    <property type="reaction ID" value="UER00592"/>
</dbReference>
<dbReference type="Proteomes" id="UP000001317">
    <property type="component" value="Chromosome"/>
</dbReference>
<dbReference type="GO" id="GO:0005737">
    <property type="term" value="C:cytoplasm"/>
    <property type="evidence" value="ECO:0007669"/>
    <property type="project" value="UniProtKB-SubCell"/>
</dbReference>
<dbReference type="GO" id="GO:0033819">
    <property type="term" value="F:lipoyl(octanoyl) transferase activity"/>
    <property type="evidence" value="ECO:0007669"/>
    <property type="project" value="UniProtKB-EC"/>
</dbReference>
<dbReference type="GO" id="GO:0036211">
    <property type="term" value="P:protein modification process"/>
    <property type="evidence" value="ECO:0007669"/>
    <property type="project" value="InterPro"/>
</dbReference>
<dbReference type="CDD" id="cd16444">
    <property type="entry name" value="LipB"/>
    <property type="match status" value="1"/>
</dbReference>
<dbReference type="FunFam" id="3.30.930.10:FF:000020">
    <property type="entry name" value="Octanoyltransferase"/>
    <property type="match status" value="1"/>
</dbReference>
<dbReference type="Gene3D" id="3.30.930.10">
    <property type="entry name" value="Bira Bifunctional Protein, Domain 2"/>
    <property type="match status" value="1"/>
</dbReference>
<dbReference type="HAMAP" id="MF_00013">
    <property type="entry name" value="LipB"/>
    <property type="match status" value="1"/>
</dbReference>
<dbReference type="InterPro" id="IPR045864">
    <property type="entry name" value="aa-tRNA-synth_II/BPL/LPL"/>
</dbReference>
<dbReference type="InterPro" id="IPR004143">
    <property type="entry name" value="BPL_LPL_catalytic"/>
</dbReference>
<dbReference type="InterPro" id="IPR000544">
    <property type="entry name" value="Octanoyltransferase"/>
</dbReference>
<dbReference type="InterPro" id="IPR020605">
    <property type="entry name" value="Octanoyltransferase_CS"/>
</dbReference>
<dbReference type="NCBIfam" id="TIGR00214">
    <property type="entry name" value="lipB"/>
    <property type="match status" value="1"/>
</dbReference>
<dbReference type="NCBIfam" id="NF010922">
    <property type="entry name" value="PRK14342.1"/>
    <property type="match status" value="1"/>
</dbReference>
<dbReference type="PANTHER" id="PTHR10993:SF7">
    <property type="entry name" value="LIPOYLTRANSFERASE 2, MITOCHONDRIAL-RELATED"/>
    <property type="match status" value="1"/>
</dbReference>
<dbReference type="PANTHER" id="PTHR10993">
    <property type="entry name" value="OCTANOYLTRANSFERASE"/>
    <property type="match status" value="1"/>
</dbReference>
<dbReference type="Pfam" id="PF21948">
    <property type="entry name" value="LplA-B_cat"/>
    <property type="match status" value="1"/>
</dbReference>
<dbReference type="PIRSF" id="PIRSF016262">
    <property type="entry name" value="LPLase"/>
    <property type="match status" value="1"/>
</dbReference>
<dbReference type="SUPFAM" id="SSF55681">
    <property type="entry name" value="Class II aaRS and biotin synthetases"/>
    <property type="match status" value="1"/>
</dbReference>
<dbReference type="PROSITE" id="PS51733">
    <property type="entry name" value="BPL_LPL_CATALYTIC"/>
    <property type="match status" value="1"/>
</dbReference>
<dbReference type="PROSITE" id="PS01313">
    <property type="entry name" value="LIPB"/>
    <property type="match status" value="1"/>
</dbReference>
<proteinExistence type="inferred from homology"/>
<protein>
    <recommendedName>
        <fullName evidence="1">Octanoyltransferase</fullName>
        <ecNumber evidence="1">2.3.1.181</ecNumber>
    </recommendedName>
    <alternativeName>
        <fullName evidence="1">Lipoate-protein ligase B</fullName>
    </alternativeName>
    <alternativeName>
        <fullName evidence="1">Lipoyl/octanoyl transferase</fullName>
    </alternativeName>
    <alternativeName>
        <fullName evidence="1">Octanoyl-[acyl-carrier-protein]-protein N-octanoyltransferase</fullName>
    </alternativeName>
</protein>
<feature type="chain" id="PRO_1000074015" description="Octanoyltransferase">
    <location>
        <begin position="1"/>
        <end position="219"/>
    </location>
</feature>
<feature type="domain" description="BPL/LPL catalytic" evidence="2">
    <location>
        <begin position="32"/>
        <end position="207"/>
    </location>
</feature>
<feature type="active site" description="Acyl-thioester intermediate" evidence="1">
    <location>
        <position position="169"/>
    </location>
</feature>
<feature type="binding site" evidence="1">
    <location>
        <begin position="71"/>
        <end position="78"/>
    </location>
    <ligand>
        <name>substrate</name>
    </ligand>
</feature>
<feature type="binding site" evidence="1">
    <location>
        <begin position="138"/>
        <end position="140"/>
    </location>
    <ligand>
        <name>substrate</name>
    </ligand>
</feature>
<feature type="binding site" evidence="1">
    <location>
        <begin position="151"/>
        <end position="153"/>
    </location>
    <ligand>
        <name>substrate</name>
    </ligand>
</feature>
<feature type="site" description="Lowers pKa of active site Cys" evidence="1">
    <location>
        <position position="135"/>
    </location>
</feature>
<keyword id="KW-0012">Acyltransferase</keyword>
<keyword id="KW-0963">Cytoplasm</keyword>
<keyword id="KW-0808">Transferase</keyword>